<sequence length="520" mass="54705">MLLVDVATASVDVGAMSSRLAKTARIADLLSRAGTEQDARLVAVTVAWLSGELPQRQIGVGWAALRSLPAPAAAPTLTVTAVDAVFSEIGAVAGKGSQARRAGLIAELFAAATDVEQTFLRRLLTGELRQGALIGVMADAVAKAADVPAARVRRAAMLAGDLPAVAAAVLAGGDAALARFTLQVGRPVGPMLAQTATGVADALDRLGGTAVFEAKLDGARVQIHRRGSDVSVYTRSLDDVTARLPEVVEAALALPVTDLIADAEAIALRPDGRPHRFQVTASRFGRAAARATQPLSVFMFDLLHVDGADLLDQPTSDRVRVLDDLVPAAHRVDRLVTDDGAAAQRFLEATLAAGHEGVMAKSPNAPYEAGRRGAGWLKVKPVHTLDLVVLAVEWGSGRRTGKLSNIHLGARDPATGGFVMLGKTFKGMTDAMLDWQTARFLELADPAAQPATSGRDPTDGHTVKVRPEQVVEIAFDGVQGSTRYPGGMALRFARVLRYRDDKSPAEADTVDTVRAFYEHG</sequence>
<dbReference type="EC" id="6.5.1.1" evidence="1"/>
<dbReference type="EMBL" id="CP000384">
    <property type="protein sequence ID" value="ABG07908.1"/>
    <property type="molecule type" value="Genomic_DNA"/>
</dbReference>
<dbReference type="SMR" id="Q1BB26"/>
<dbReference type="KEGG" id="mmc:Mmcs_1799"/>
<dbReference type="HOGENOM" id="CLU_005138_6_1_11"/>
<dbReference type="BioCyc" id="MSP164756:G1G6O-1841-MONOMER"/>
<dbReference type="GO" id="GO:0005524">
    <property type="term" value="F:ATP binding"/>
    <property type="evidence" value="ECO:0007669"/>
    <property type="project" value="UniProtKB-UniRule"/>
</dbReference>
<dbReference type="GO" id="GO:0003677">
    <property type="term" value="F:DNA binding"/>
    <property type="evidence" value="ECO:0007669"/>
    <property type="project" value="InterPro"/>
</dbReference>
<dbReference type="GO" id="GO:0003910">
    <property type="term" value="F:DNA ligase (ATP) activity"/>
    <property type="evidence" value="ECO:0007669"/>
    <property type="project" value="UniProtKB-UniRule"/>
</dbReference>
<dbReference type="GO" id="GO:0046872">
    <property type="term" value="F:metal ion binding"/>
    <property type="evidence" value="ECO:0007669"/>
    <property type="project" value="UniProtKB-KW"/>
</dbReference>
<dbReference type="GO" id="GO:0051301">
    <property type="term" value="P:cell division"/>
    <property type="evidence" value="ECO:0007669"/>
    <property type="project" value="UniProtKB-KW"/>
</dbReference>
<dbReference type="GO" id="GO:0071897">
    <property type="term" value="P:DNA biosynthetic process"/>
    <property type="evidence" value="ECO:0007669"/>
    <property type="project" value="InterPro"/>
</dbReference>
<dbReference type="GO" id="GO:0006310">
    <property type="term" value="P:DNA recombination"/>
    <property type="evidence" value="ECO:0007669"/>
    <property type="project" value="UniProtKB-UniRule"/>
</dbReference>
<dbReference type="GO" id="GO:0006281">
    <property type="term" value="P:DNA repair"/>
    <property type="evidence" value="ECO:0007669"/>
    <property type="project" value="UniProtKB-UniRule"/>
</dbReference>
<dbReference type="GO" id="GO:0006260">
    <property type="term" value="P:DNA replication"/>
    <property type="evidence" value="ECO:0007669"/>
    <property type="project" value="UniProtKB-UniRule"/>
</dbReference>
<dbReference type="CDD" id="cd07901">
    <property type="entry name" value="Adenylation_DNA_ligase_Arch_LigB"/>
    <property type="match status" value="1"/>
</dbReference>
<dbReference type="CDD" id="cd07972">
    <property type="entry name" value="OBF_DNA_ligase_Arch_LigB"/>
    <property type="match status" value="1"/>
</dbReference>
<dbReference type="FunFam" id="2.40.50.140:FF:000163">
    <property type="entry name" value="Probable DNA ligase"/>
    <property type="match status" value="1"/>
</dbReference>
<dbReference type="Gene3D" id="1.10.3260.10">
    <property type="entry name" value="DNA ligase, ATP-dependent, N-terminal domain"/>
    <property type="match status" value="1"/>
</dbReference>
<dbReference type="Gene3D" id="3.30.470.30">
    <property type="entry name" value="DNA ligase/mRNA capping enzyme"/>
    <property type="match status" value="1"/>
</dbReference>
<dbReference type="Gene3D" id="2.40.50.140">
    <property type="entry name" value="Nucleic acid-binding proteins"/>
    <property type="match status" value="1"/>
</dbReference>
<dbReference type="HAMAP" id="MF_00407">
    <property type="entry name" value="DNA_ligase"/>
    <property type="match status" value="1"/>
</dbReference>
<dbReference type="InterPro" id="IPR050191">
    <property type="entry name" value="ATP-dep_DNA_ligase"/>
</dbReference>
<dbReference type="InterPro" id="IPR022865">
    <property type="entry name" value="DNA_ligae_ATP-dep_bac/arc"/>
</dbReference>
<dbReference type="InterPro" id="IPR000977">
    <property type="entry name" value="DNA_ligase_ATP-dep"/>
</dbReference>
<dbReference type="InterPro" id="IPR012309">
    <property type="entry name" value="DNA_ligase_ATP-dep_C"/>
</dbReference>
<dbReference type="InterPro" id="IPR012310">
    <property type="entry name" value="DNA_ligase_ATP-dep_cent"/>
</dbReference>
<dbReference type="InterPro" id="IPR016059">
    <property type="entry name" value="DNA_ligase_ATP-dep_CS"/>
</dbReference>
<dbReference type="InterPro" id="IPR012308">
    <property type="entry name" value="DNA_ligase_ATP-dep_N"/>
</dbReference>
<dbReference type="InterPro" id="IPR036599">
    <property type="entry name" value="DNA_ligase_N_sf"/>
</dbReference>
<dbReference type="InterPro" id="IPR012340">
    <property type="entry name" value="NA-bd_OB-fold"/>
</dbReference>
<dbReference type="NCBIfam" id="TIGR00574">
    <property type="entry name" value="dnl1"/>
    <property type="match status" value="1"/>
</dbReference>
<dbReference type="NCBIfam" id="NF002868">
    <property type="entry name" value="PRK03180.1"/>
    <property type="match status" value="1"/>
</dbReference>
<dbReference type="PANTHER" id="PTHR45674">
    <property type="entry name" value="DNA LIGASE 1/3 FAMILY MEMBER"/>
    <property type="match status" value="1"/>
</dbReference>
<dbReference type="PANTHER" id="PTHR45674:SF13">
    <property type="entry name" value="DNA LIGASE-RELATED"/>
    <property type="match status" value="1"/>
</dbReference>
<dbReference type="Pfam" id="PF04679">
    <property type="entry name" value="DNA_ligase_A_C"/>
    <property type="match status" value="1"/>
</dbReference>
<dbReference type="Pfam" id="PF01068">
    <property type="entry name" value="DNA_ligase_A_M"/>
    <property type="match status" value="1"/>
</dbReference>
<dbReference type="Pfam" id="PF04675">
    <property type="entry name" value="DNA_ligase_A_N"/>
    <property type="match status" value="1"/>
</dbReference>
<dbReference type="SUPFAM" id="SSF117018">
    <property type="entry name" value="ATP-dependent DNA ligase DNA-binding domain"/>
    <property type="match status" value="1"/>
</dbReference>
<dbReference type="SUPFAM" id="SSF56091">
    <property type="entry name" value="DNA ligase/mRNA capping enzyme, catalytic domain"/>
    <property type="match status" value="1"/>
</dbReference>
<dbReference type="SUPFAM" id="SSF50249">
    <property type="entry name" value="Nucleic acid-binding proteins"/>
    <property type="match status" value="1"/>
</dbReference>
<dbReference type="PROSITE" id="PS00697">
    <property type="entry name" value="DNA_LIGASE_A1"/>
    <property type="match status" value="1"/>
</dbReference>
<dbReference type="PROSITE" id="PS00333">
    <property type="entry name" value="DNA_LIGASE_A2"/>
    <property type="match status" value="1"/>
</dbReference>
<dbReference type="PROSITE" id="PS50160">
    <property type="entry name" value="DNA_LIGASE_A3"/>
    <property type="match status" value="1"/>
</dbReference>
<name>DNLI_MYCSS</name>
<evidence type="ECO:0000255" key="1">
    <source>
        <dbReference type="HAMAP-Rule" id="MF_00407"/>
    </source>
</evidence>
<comment type="function">
    <text evidence="1">DNA ligase that seals nicks in double-stranded DNA during DNA replication, DNA recombination and DNA repair.</text>
</comment>
<comment type="catalytic activity">
    <reaction evidence="1">
        <text>ATP + (deoxyribonucleotide)n-3'-hydroxyl + 5'-phospho-(deoxyribonucleotide)m = (deoxyribonucleotide)n+m + AMP + diphosphate.</text>
        <dbReference type="EC" id="6.5.1.1"/>
    </reaction>
</comment>
<comment type="cofactor">
    <cofactor evidence="1">
        <name>Mg(2+)</name>
        <dbReference type="ChEBI" id="CHEBI:18420"/>
    </cofactor>
</comment>
<comment type="similarity">
    <text evidence="1">Belongs to the ATP-dependent DNA ligase family.</text>
</comment>
<reference key="1">
    <citation type="submission" date="2006-06" db="EMBL/GenBank/DDBJ databases">
        <title>Complete sequence of chromosome of Mycobacterium sp. MCS.</title>
        <authorList>
            <consortium name="US DOE Joint Genome Institute"/>
            <person name="Copeland A."/>
            <person name="Lucas S."/>
            <person name="Lapidus A."/>
            <person name="Barry K."/>
            <person name="Detter J.C."/>
            <person name="Glavina del Rio T."/>
            <person name="Hammon N."/>
            <person name="Israni S."/>
            <person name="Dalin E."/>
            <person name="Tice H."/>
            <person name="Pitluck S."/>
            <person name="Martinez M."/>
            <person name="Schmutz J."/>
            <person name="Larimer F."/>
            <person name="Land M."/>
            <person name="Hauser L."/>
            <person name="Kyrpides N."/>
            <person name="Kim E."/>
            <person name="Miller C.D."/>
            <person name="Hughes J.E."/>
            <person name="Anderson A.J."/>
            <person name="Sims R.C."/>
            <person name="Richardson P."/>
        </authorList>
    </citation>
    <scope>NUCLEOTIDE SEQUENCE [LARGE SCALE GENOMIC DNA]</scope>
    <source>
        <strain>MCS</strain>
    </source>
</reference>
<proteinExistence type="inferred from homology"/>
<accession>Q1BB26</accession>
<feature type="chain" id="PRO_0000365230" description="Probable DNA ligase">
    <location>
        <begin position="1"/>
        <end position="520"/>
    </location>
</feature>
<feature type="active site" description="N6-AMP-lysine intermediate" evidence="1">
    <location>
        <position position="215"/>
    </location>
</feature>
<feature type="binding site" evidence="1">
    <location>
        <position position="213"/>
    </location>
    <ligand>
        <name>ATP</name>
        <dbReference type="ChEBI" id="CHEBI:30616"/>
    </ligand>
</feature>
<feature type="binding site" evidence="1">
    <location>
        <position position="220"/>
    </location>
    <ligand>
        <name>ATP</name>
        <dbReference type="ChEBI" id="CHEBI:30616"/>
    </ligand>
</feature>
<feature type="binding site" evidence="1">
    <location>
        <position position="235"/>
    </location>
    <ligand>
        <name>ATP</name>
        <dbReference type="ChEBI" id="CHEBI:30616"/>
    </ligand>
</feature>
<feature type="binding site" evidence="1">
    <location>
        <position position="264"/>
    </location>
    <ligand>
        <name>ATP</name>
        <dbReference type="ChEBI" id="CHEBI:30616"/>
    </ligand>
</feature>
<feature type="binding site" evidence="1">
    <location>
        <position position="300"/>
    </location>
    <ligand>
        <name>ATP</name>
        <dbReference type="ChEBI" id="CHEBI:30616"/>
    </ligand>
</feature>
<feature type="binding site" evidence="1">
    <location>
        <position position="372"/>
    </location>
    <ligand>
        <name>ATP</name>
        <dbReference type="ChEBI" id="CHEBI:30616"/>
    </ligand>
</feature>
<feature type="binding site" evidence="1">
    <location>
        <position position="378"/>
    </location>
    <ligand>
        <name>ATP</name>
        <dbReference type="ChEBI" id="CHEBI:30616"/>
    </ligand>
</feature>
<gene>
    <name evidence="1" type="primary">lig</name>
    <name type="ordered locus">Mmcs_1799</name>
</gene>
<organism>
    <name type="scientific">Mycobacterium sp. (strain MCS)</name>
    <dbReference type="NCBI Taxonomy" id="164756"/>
    <lineage>
        <taxon>Bacteria</taxon>
        <taxon>Bacillati</taxon>
        <taxon>Actinomycetota</taxon>
        <taxon>Actinomycetes</taxon>
        <taxon>Mycobacteriales</taxon>
        <taxon>Mycobacteriaceae</taxon>
        <taxon>Mycobacterium</taxon>
    </lineage>
</organism>
<protein>
    <recommendedName>
        <fullName evidence="1">Probable DNA ligase</fullName>
        <ecNumber evidence="1">6.5.1.1</ecNumber>
    </recommendedName>
    <alternativeName>
        <fullName evidence="1">Polydeoxyribonucleotide synthase [ATP]</fullName>
    </alternativeName>
</protein>
<keyword id="KW-0067">ATP-binding</keyword>
<keyword id="KW-0131">Cell cycle</keyword>
<keyword id="KW-0132">Cell division</keyword>
<keyword id="KW-0227">DNA damage</keyword>
<keyword id="KW-0233">DNA recombination</keyword>
<keyword id="KW-0234">DNA repair</keyword>
<keyword id="KW-0235">DNA replication</keyword>
<keyword id="KW-0436">Ligase</keyword>
<keyword id="KW-0460">Magnesium</keyword>
<keyword id="KW-0479">Metal-binding</keyword>
<keyword id="KW-0547">Nucleotide-binding</keyword>